<accession>B3EJ26</accession>
<reference key="1">
    <citation type="submission" date="2008-06" db="EMBL/GenBank/DDBJ databases">
        <title>Complete sequence of Chlorobium phaeobacteroides BS1.</title>
        <authorList>
            <consortium name="US DOE Joint Genome Institute"/>
            <person name="Lucas S."/>
            <person name="Copeland A."/>
            <person name="Lapidus A."/>
            <person name="Glavina del Rio T."/>
            <person name="Dalin E."/>
            <person name="Tice H."/>
            <person name="Bruce D."/>
            <person name="Goodwin L."/>
            <person name="Pitluck S."/>
            <person name="Schmutz J."/>
            <person name="Larimer F."/>
            <person name="Land M."/>
            <person name="Hauser L."/>
            <person name="Kyrpides N."/>
            <person name="Ovchinnikova G."/>
            <person name="Li T."/>
            <person name="Liu Z."/>
            <person name="Zhao F."/>
            <person name="Overmann J."/>
            <person name="Bryant D.A."/>
            <person name="Richardson P."/>
        </authorList>
    </citation>
    <scope>NUCLEOTIDE SEQUENCE [LARGE SCALE GENOMIC DNA]</scope>
    <source>
        <strain>BS1</strain>
    </source>
</reference>
<organism>
    <name type="scientific">Chlorobium phaeobacteroides (strain BS1)</name>
    <dbReference type="NCBI Taxonomy" id="331678"/>
    <lineage>
        <taxon>Bacteria</taxon>
        <taxon>Pseudomonadati</taxon>
        <taxon>Chlorobiota</taxon>
        <taxon>Chlorobiia</taxon>
        <taxon>Chlorobiales</taxon>
        <taxon>Chlorobiaceae</taxon>
        <taxon>Chlorobium/Pelodictyon group</taxon>
        <taxon>Chlorobium</taxon>
    </lineage>
</organism>
<comment type="function">
    <text evidence="1">This protein is located at the 30S-50S ribosomal subunit interface and may play a role in the structure and function of the aminoacyl-tRNA binding site.</text>
</comment>
<comment type="similarity">
    <text evidence="1">Belongs to the bacterial ribosomal protein bL19 family.</text>
</comment>
<dbReference type="EMBL" id="CP001101">
    <property type="protein sequence ID" value="ACE04226.1"/>
    <property type="molecule type" value="Genomic_DNA"/>
</dbReference>
<dbReference type="SMR" id="B3EJ26"/>
<dbReference type="STRING" id="331678.Cphamn1_1295"/>
<dbReference type="KEGG" id="cpb:Cphamn1_1295"/>
<dbReference type="eggNOG" id="COG0335">
    <property type="taxonomic scope" value="Bacteria"/>
</dbReference>
<dbReference type="HOGENOM" id="CLU_103507_2_1_10"/>
<dbReference type="OrthoDB" id="9803541at2"/>
<dbReference type="GO" id="GO:0022625">
    <property type="term" value="C:cytosolic large ribosomal subunit"/>
    <property type="evidence" value="ECO:0007669"/>
    <property type="project" value="TreeGrafter"/>
</dbReference>
<dbReference type="GO" id="GO:0003735">
    <property type="term" value="F:structural constituent of ribosome"/>
    <property type="evidence" value="ECO:0007669"/>
    <property type="project" value="InterPro"/>
</dbReference>
<dbReference type="GO" id="GO:0006412">
    <property type="term" value="P:translation"/>
    <property type="evidence" value="ECO:0007669"/>
    <property type="project" value="UniProtKB-UniRule"/>
</dbReference>
<dbReference type="FunFam" id="2.30.30.790:FF:000001">
    <property type="entry name" value="50S ribosomal protein L19"/>
    <property type="match status" value="1"/>
</dbReference>
<dbReference type="Gene3D" id="2.30.30.790">
    <property type="match status" value="1"/>
</dbReference>
<dbReference type="HAMAP" id="MF_00402">
    <property type="entry name" value="Ribosomal_bL19"/>
    <property type="match status" value="1"/>
</dbReference>
<dbReference type="InterPro" id="IPR001857">
    <property type="entry name" value="Ribosomal_bL19"/>
</dbReference>
<dbReference type="InterPro" id="IPR018257">
    <property type="entry name" value="Ribosomal_bL19_CS"/>
</dbReference>
<dbReference type="InterPro" id="IPR038657">
    <property type="entry name" value="Ribosomal_bL19_sf"/>
</dbReference>
<dbReference type="InterPro" id="IPR008991">
    <property type="entry name" value="Translation_prot_SH3-like_sf"/>
</dbReference>
<dbReference type="NCBIfam" id="TIGR01024">
    <property type="entry name" value="rplS_bact"/>
    <property type="match status" value="1"/>
</dbReference>
<dbReference type="PANTHER" id="PTHR15680:SF9">
    <property type="entry name" value="LARGE RIBOSOMAL SUBUNIT PROTEIN BL19M"/>
    <property type="match status" value="1"/>
</dbReference>
<dbReference type="PANTHER" id="PTHR15680">
    <property type="entry name" value="RIBOSOMAL PROTEIN L19"/>
    <property type="match status" value="1"/>
</dbReference>
<dbReference type="Pfam" id="PF01245">
    <property type="entry name" value="Ribosomal_L19"/>
    <property type="match status" value="1"/>
</dbReference>
<dbReference type="PIRSF" id="PIRSF002191">
    <property type="entry name" value="Ribosomal_L19"/>
    <property type="match status" value="1"/>
</dbReference>
<dbReference type="PRINTS" id="PR00061">
    <property type="entry name" value="RIBOSOMALL19"/>
</dbReference>
<dbReference type="SUPFAM" id="SSF50104">
    <property type="entry name" value="Translation proteins SH3-like domain"/>
    <property type="match status" value="1"/>
</dbReference>
<dbReference type="PROSITE" id="PS01015">
    <property type="entry name" value="RIBOSOMAL_L19"/>
    <property type="match status" value="1"/>
</dbReference>
<gene>
    <name evidence="1" type="primary">rplS</name>
    <name type="ordered locus">Cphamn1_1295</name>
</gene>
<sequence length="121" mass="13528">MDQFIQLVEASQVRNDLPDIHPGDTVKLQLKVIEGEKERLQAFEGVIISDKGMGTSKTITVRKISNGVGVERIIPLCSPNIESITVLRKGKTRRAKLSYLRKRTGKAALKVKERKVFTPSK</sequence>
<feature type="chain" id="PRO_1000193808" description="Large ribosomal subunit protein bL19">
    <location>
        <begin position="1"/>
        <end position="121"/>
    </location>
</feature>
<protein>
    <recommendedName>
        <fullName evidence="1">Large ribosomal subunit protein bL19</fullName>
    </recommendedName>
    <alternativeName>
        <fullName evidence="2">50S ribosomal protein L19</fullName>
    </alternativeName>
</protein>
<proteinExistence type="inferred from homology"/>
<keyword id="KW-0687">Ribonucleoprotein</keyword>
<keyword id="KW-0689">Ribosomal protein</keyword>
<evidence type="ECO:0000255" key="1">
    <source>
        <dbReference type="HAMAP-Rule" id="MF_00402"/>
    </source>
</evidence>
<evidence type="ECO:0000305" key="2"/>
<name>RL19_CHLPB</name>